<sequence>MRFLDAGETHGKALIAIIEGFPAHVKIDIENINHLLQLRQRGYGRGKRMEIEKDRVKILSGVRNSFTTGAPITLMIENRDYENWRSFMDATQCDVDTKKVTVPRPGHADLAGCLKYEFDDARNVLERASARETAIRVAVGAVCEELLKMFGIKLYNHVVEIGRVRLTKSYSFDDTELFEQALSSSDLFCIDKEAEMKMKEEIDIAKQIGDSVGGIAEVICKNVPYGIGSHVHWDRKLDAQIAHSVMSIQSVKGVEIGMGFEAARRFGSEVHDEIYYDDKKGFYRKTNNAGGIEGGISNGMDIVVRAAFKPIPTLYKPLKSVDIRTFQPAEAAVERSDICAVPAGSIVMRAAIAYVLANALIERLGGDSAKTMLETFKRIYNKG</sequence>
<comment type="function">
    <text evidence="1">Catalyzes the anti-1,4-elimination of the C-3 phosphate and the C-6 proR hydrogen from 5-enolpyruvylshikimate-3-phosphate (EPSP) to yield chorismate, which is the branch point compound that serves as the starting substrate for the three terminal pathways of aromatic amino acid biosynthesis. This reaction introduces a second double bond into the aromatic ring system.</text>
</comment>
<comment type="catalytic activity">
    <reaction evidence="1">
        <text>5-O-(1-carboxyvinyl)-3-phosphoshikimate = chorismate + phosphate</text>
        <dbReference type="Rhea" id="RHEA:21020"/>
        <dbReference type="ChEBI" id="CHEBI:29748"/>
        <dbReference type="ChEBI" id="CHEBI:43474"/>
        <dbReference type="ChEBI" id="CHEBI:57701"/>
        <dbReference type="EC" id="4.2.3.5"/>
    </reaction>
</comment>
<comment type="cofactor">
    <cofactor evidence="1">
        <name>FMNH2</name>
        <dbReference type="ChEBI" id="CHEBI:57618"/>
    </cofactor>
    <text evidence="1">Reduced FMN (FMNH(2)).</text>
</comment>
<comment type="pathway">
    <text evidence="1">Metabolic intermediate biosynthesis; chorismate biosynthesis; chorismate from D-erythrose 4-phosphate and phosphoenolpyruvate: step 7/7.</text>
</comment>
<comment type="subunit">
    <text evidence="1">Homotetramer.</text>
</comment>
<comment type="similarity">
    <text evidence="1">Belongs to the chorismate synthase family.</text>
</comment>
<organism>
    <name type="scientific">Caldicellulosiruptor bescii (strain ATCC BAA-1888 / DSM 6725 / KCTC 15123 / Z-1320)</name>
    <name type="common">Anaerocellum thermophilum</name>
    <dbReference type="NCBI Taxonomy" id="521460"/>
    <lineage>
        <taxon>Bacteria</taxon>
        <taxon>Bacillati</taxon>
        <taxon>Bacillota</taxon>
        <taxon>Bacillota incertae sedis</taxon>
        <taxon>Caldicellulosiruptorales</taxon>
        <taxon>Caldicellulosiruptoraceae</taxon>
        <taxon>Caldicellulosiruptor</taxon>
    </lineage>
</organism>
<name>AROC_CALBD</name>
<feature type="chain" id="PRO_1000132752" description="Chorismate synthase">
    <location>
        <begin position="1"/>
        <end position="383"/>
    </location>
</feature>
<feature type="binding site" evidence="1">
    <location>
        <position position="39"/>
    </location>
    <ligand>
        <name>NADP(+)</name>
        <dbReference type="ChEBI" id="CHEBI:58349"/>
    </ligand>
</feature>
<feature type="binding site" evidence="1">
    <location>
        <position position="45"/>
    </location>
    <ligand>
        <name>NADP(+)</name>
        <dbReference type="ChEBI" id="CHEBI:58349"/>
    </ligand>
</feature>
<feature type="binding site" evidence="1">
    <location>
        <begin position="127"/>
        <end position="129"/>
    </location>
    <ligand>
        <name>FMN</name>
        <dbReference type="ChEBI" id="CHEBI:58210"/>
    </ligand>
</feature>
<feature type="binding site" evidence="1">
    <location>
        <begin position="249"/>
        <end position="250"/>
    </location>
    <ligand>
        <name>FMN</name>
        <dbReference type="ChEBI" id="CHEBI:58210"/>
    </ligand>
</feature>
<feature type="binding site" evidence="1">
    <location>
        <position position="294"/>
    </location>
    <ligand>
        <name>FMN</name>
        <dbReference type="ChEBI" id="CHEBI:58210"/>
    </ligand>
</feature>
<feature type="binding site" evidence="1">
    <location>
        <begin position="309"/>
        <end position="313"/>
    </location>
    <ligand>
        <name>FMN</name>
        <dbReference type="ChEBI" id="CHEBI:58210"/>
    </ligand>
</feature>
<feature type="binding site" evidence="1">
    <location>
        <position position="335"/>
    </location>
    <ligand>
        <name>FMN</name>
        <dbReference type="ChEBI" id="CHEBI:58210"/>
    </ligand>
</feature>
<gene>
    <name evidence="1" type="primary">aroC</name>
    <name type="ordered locus">Athe_1279</name>
</gene>
<keyword id="KW-0028">Amino-acid biosynthesis</keyword>
<keyword id="KW-0057">Aromatic amino acid biosynthesis</keyword>
<keyword id="KW-0274">FAD</keyword>
<keyword id="KW-0285">Flavoprotein</keyword>
<keyword id="KW-0288">FMN</keyword>
<keyword id="KW-0456">Lyase</keyword>
<keyword id="KW-0521">NADP</keyword>
<protein>
    <recommendedName>
        <fullName evidence="1">Chorismate synthase</fullName>
        <shortName evidence="1">CS</shortName>
        <ecNumber evidence="1">4.2.3.5</ecNumber>
    </recommendedName>
    <alternativeName>
        <fullName evidence="1">5-enolpyruvylshikimate-3-phosphate phospholyase</fullName>
    </alternativeName>
</protein>
<evidence type="ECO:0000255" key="1">
    <source>
        <dbReference type="HAMAP-Rule" id="MF_00300"/>
    </source>
</evidence>
<reference key="1">
    <citation type="submission" date="2009-01" db="EMBL/GenBank/DDBJ databases">
        <title>Complete sequence of chromosome of Caldicellulosiruptor becscii DSM 6725.</title>
        <authorList>
            <person name="Lucas S."/>
            <person name="Copeland A."/>
            <person name="Lapidus A."/>
            <person name="Glavina del Rio T."/>
            <person name="Tice H."/>
            <person name="Bruce D."/>
            <person name="Goodwin L."/>
            <person name="Pitluck S."/>
            <person name="Sims D."/>
            <person name="Meincke L."/>
            <person name="Brettin T."/>
            <person name="Detter J.C."/>
            <person name="Han C."/>
            <person name="Larimer F."/>
            <person name="Land M."/>
            <person name="Hauser L."/>
            <person name="Kyrpides N."/>
            <person name="Ovchinnikova G."/>
            <person name="Kataeva I."/>
            <person name="Adams M.W.W."/>
        </authorList>
    </citation>
    <scope>NUCLEOTIDE SEQUENCE [LARGE SCALE GENOMIC DNA]</scope>
    <source>
        <strain>ATCC BAA-1888 / DSM 6725 / KCTC 15123 / Z-1320</strain>
    </source>
</reference>
<dbReference type="EC" id="4.2.3.5" evidence="1"/>
<dbReference type="EMBL" id="CP001393">
    <property type="protein sequence ID" value="ACM60379.1"/>
    <property type="molecule type" value="Genomic_DNA"/>
</dbReference>
<dbReference type="RefSeq" id="WP_015907763.1">
    <property type="nucleotide sequence ID" value="NC_012034.1"/>
</dbReference>
<dbReference type="SMR" id="B9MRS5"/>
<dbReference type="STRING" id="521460.Athe_1279"/>
<dbReference type="GeneID" id="31772627"/>
<dbReference type="KEGG" id="ate:Athe_1279"/>
<dbReference type="eggNOG" id="COG0082">
    <property type="taxonomic scope" value="Bacteria"/>
</dbReference>
<dbReference type="HOGENOM" id="CLU_034547_2_0_9"/>
<dbReference type="UniPathway" id="UPA00053">
    <property type="reaction ID" value="UER00090"/>
</dbReference>
<dbReference type="Proteomes" id="UP000007723">
    <property type="component" value="Chromosome"/>
</dbReference>
<dbReference type="GO" id="GO:0005829">
    <property type="term" value="C:cytosol"/>
    <property type="evidence" value="ECO:0007669"/>
    <property type="project" value="TreeGrafter"/>
</dbReference>
<dbReference type="GO" id="GO:0004107">
    <property type="term" value="F:chorismate synthase activity"/>
    <property type="evidence" value="ECO:0007669"/>
    <property type="project" value="UniProtKB-UniRule"/>
</dbReference>
<dbReference type="GO" id="GO:0010181">
    <property type="term" value="F:FMN binding"/>
    <property type="evidence" value="ECO:0007669"/>
    <property type="project" value="TreeGrafter"/>
</dbReference>
<dbReference type="GO" id="GO:0008652">
    <property type="term" value="P:amino acid biosynthetic process"/>
    <property type="evidence" value="ECO:0007669"/>
    <property type="project" value="UniProtKB-KW"/>
</dbReference>
<dbReference type="GO" id="GO:0009073">
    <property type="term" value="P:aromatic amino acid family biosynthetic process"/>
    <property type="evidence" value="ECO:0007669"/>
    <property type="project" value="UniProtKB-KW"/>
</dbReference>
<dbReference type="GO" id="GO:0009423">
    <property type="term" value="P:chorismate biosynthetic process"/>
    <property type="evidence" value="ECO:0007669"/>
    <property type="project" value="UniProtKB-UniRule"/>
</dbReference>
<dbReference type="CDD" id="cd07304">
    <property type="entry name" value="Chorismate_synthase"/>
    <property type="match status" value="1"/>
</dbReference>
<dbReference type="FunFam" id="3.60.150.10:FF:000002">
    <property type="entry name" value="Chorismate synthase"/>
    <property type="match status" value="1"/>
</dbReference>
<dbReference type="Gene3D" id="3.60.150.10">
    <property type="entry name" value="Chorismate synthase AroC"/>
    <property type="match status" value="1"/>
</dbReference>
<dbReference type="HAMAP" id="MF_00300">
    <property type="entry name" value="Chorismate_synth"/>
    <property type="match status" value="1"/>
</dbReference>
<dbReference type="InterPro" id="IPR000453">
    <property type="entry name" value="Chorismate_synth"/>
</dbReference>
<dbReference type="InterPro" id="IPR035904">
    <property type="entry name" value="Chorismate_synth_AroC_sf"/>
</dbReference>
<dbReference type="InterPro" id="IPR020541">
    <property type="entry name" value="Chorismate_synthase_CS"/>
</dbReference>
<dbReference type="NCBIfam" id="TIGR00033">
    <property type="entry name" value="aroC"/>
    <property type="match status" value="1"/>
</dbReference>
<dbReference type="NCBIfam" id="NF003793">
    <property type="entry name" value="PRK05382.1"/>
    <property type="match status" value="1"/>
</dbReference>
<dbReference type="PANTHER" id="PTHR21085">
    <property type="entry name" value="CHORISMATE SYNTHASE"/>
    <property type="match status" value="1"/>
</dbReference>
<dbReference type="PANTHER" id="PTHR21085:SF0">
    <property type="entry name" value="CHORISMATE SYNTHASE"/>
    <property type="match status" value="1"/>
</dbReference>
<dbReference type="Pfam" id="PF01264">
    <property type="entry name" value="Chorismate_synt"/>
    <property type="match status" value="1"/>
</dbReference>
<dbReference type="PIRSF" id="PIRSF001456">
    <property type="entry name" value="Chorismate_synth"/>
    <property type="match status" value="1"/>
</dbReference>
<dbReference type="SUPFAM" id="SSF103263">
    <property type="entry name" value="Chorismate synthase, AroC"/>
    <property type="match status" value="1"/>
</dbReference>
<dbReference type="PROSITE" id="PS00788">
    <property type="entry name" value="CHORISMATE_SYNTHASE_2"/>
    <property type="match status" value="1"/>
</dbReference>
<proteinExistence type="inferred from homology"/>
<accession>B9MRS5</accession>